<name>ARNF_ECODH</name>
<accession>B1X8X2</accession>
<reference key="1">
    <citation type="journal article" date="2008" name="J. Bacteriol.">
        <title>The complete genome sequence of Escherichia coli DH10B: insights into the biology of a laboratory workhorse.</title>
        <authorList>
            <person name="Durfee T."/>
            <person name="Nelson R."/>
            <person name="Baldwin S."/>
            <person name="Plunkett G. III"/>
            <person name="Burland V."/>
            <person name="Mau B."/>
            <person name="Petrosino J.F."/>
            <person name="Qin X."/>
            <person name="Muzny D.M."/>
            <person name="Ayele M."/>
            <person name="Gibbs R.A."/>
            <person name="Csorgo B."/>
            <person name="Posfai G."/>
            <person name="Weinstock G.M."/>
            <person name="Blattner F.R."/>
        </authorList>
    </citation>
    <scope>NUCLEOTIDE SEQUENCE [LARGE SCALE GENOMIC DNA]</scope>
    <source>
        <strain>K12 / DH10B</strain>
    </source>
</reference>
<feature type="chain" id="PRO_1000128661" description="Probable 4-amino-4-deoxy-L-arabinose-phosphoundecaprenol flippase subunit ArnF">
    <location>
        <begin position="1"/>
        <end position="128"/>
    </location>
</feature>
<feature type="topological domain" description="Cytoplasmic" evidence="1">
    <location>
        <begin position="1"/>
        <end position="2"/>
    </location>
</feature>
<feature type="transmembrane region" description="Helical" evidence="1">
    <location>
        <begin position="3"/>
        <end position="23"/>
    </location>
</feature>
<feature type="topological domain" description="Periplasmic" evidence="1">
    <location>
        <begin position="24"/>
        <end position="35"/>
    </location>
</feature>
<feature type="transmembrane region" description="Helical" evidence="1">
    <location>
        <begin position="36"/>
        <end position="56"/>
    </location>
</feature>
<feature type="topological domain" description="Cytoplasmic" evidence="1">
    <location>
        <begin position="57"/>
        <end position="76"/>
    </location>
</feature>
<feature type="transmembrane region" description="Helical" evidence="1">
    <location>
        <begin position="77"/>
        <end position="97"/>
    </location>
</feature>
<feature type="topological domain" description="Periplasmic" evidence="1">
    <location>
        <begin position="98"/>
        <end position="100"/>
    </location>
</feature>
<feature type="transmembrane region" description="Helical" evidence="1">
    <location>
        <begin position="101"/>
        <end position="121"/>
    </location>
</feature>
<feature type="topological domain" description="Cytoplasmic" evidence="1">
    <location>
        <begin position="122"/>
        <end position="128"/>
    </location>
</feature>
<organism>
    <name type="scientific">Escherichia coli (strain K12 / DH10B)</name>
    <dbReference type="NCBI Taxonomy" id="316385"/>
    <lineage>
        <taxon>Bacteria</taxon>
        <taxon>Pseudomonadati</taxon>
        <taxon>Pseudomonadota</taxon>
        <taxon>Gammaproteobacteria</taxon>
        <taxon>Enterobacterales</taxon>
        <taxon>Enterobacteriaceae</taxon>
        <taxon>Escherichia</taxon>
    </lineage>
</organism>
<dbReference type="EMBL" id="CP000948">
    <property type="protein sequence ID" value="ACB03419.1"/>
    <property type="molecule type" value="Genomic_DNA"/>
</dbReference>
<dbReference type="RefSeq" id="WP_000523880.1">
    <property type="nucleotide sequence ID" value="NC_010473.1"/>
</dbReference>
<dbReference type="GeneID" id="93774915"/>
<dbReference type="KEGG" id="ecd:ECDH10B_2419"/>
<dbReference type="HOGENOM" id="CLU_131462_1_0_6"/>
<dbReference type="UniPathway" id="UPA00030"/>
<dbReference type="GO" id="GO:0005886">
    <property type="term" value="C:plasma membrane"/>
    <property type="evidence" value="ECO:0007669"/>
    <property type="project" value="UniProtKB-SubCell"/>
</dbReference>
<dbReference type="GO" id="GO:1901505">
    <property type="term" value="F:carbohydrate derivative transmembrane transporter activity"/>
    <property type="evidence" value="ECO:0007669"/>
    <property type="project" value="InterPro"/>
</dbReference>
<dbReference type="GO" id="GO:0009245">
    <property type="term" value="P:lipid A biosynthetic process"/>
    <property type="evidence" value="ECO:0007669"/>
    <property type="project" value="UniProtKB-UniRule"/>
</dbReference>
<dbReference type="GO" id="GO:0009103">
    <property type="term" value="P:lipopolysaccharide biosynthetic process"/>
    <property type="evidence" value="ECO:0007669"/>
    <property type="project" value="UniProtKB-UniRule"/>
</dbReference>
<dbReference type="FunFam" id="1.10.3730.20:FF:000003">
    <property type="entry name" value="Probable 4-amino-4-deoxy-L-arabinose-phosphoundecaprenol flippase subunit ArnF"/>
    <property type="match status" value="1"/>
</dbReference>
<dbReference type="Gene3D" id="1.10.3730.20">
    <property type="match status" value="1"/>
</dbReference>
<dbReference type="HAMAP" id="MF_00538">
    <property type="entry name" value="Flippase_ArnF"/>
    <property type="match status" value="1"/>
</dbReference>
<dbReference type="InterPro" id="IPR022832">
    <property type="entry name" value="Flippase_ArnF"/>
</dbReference>
<dbReference type="InterPro" id="IPR000390">
    <property type="entry name" value="Small_drug/metabolite_transptr"/>
</dbReference>
<dbReference type="NCBIfam" id="NF002816">
    <property type="entry name" value="PRK02971.1-2"/>
    <property type="match status" value="1"/>
</dbReference>
<dbReference type="PANTHER" id="PTHR30561:SF9">
    <property type="entry name" value="4-AMINO-4-DEOXY-L-ARABINOSE-PHOSPHOUNDECAPRENOL FLIPPASE SUBUNIT ARNF-RELATED"/>
    <property type="match status" value="1"/>
</dbReference>
<dbReference type="PANTHER" id="PTHR30561">
    <property type="entry name" value="SMR FAMILY PROTON-DEPENDENT DRUG EFFLUX TRANSPORTER SUGE"/>
    <property type="match status" value="1"/>
</dbReference>
<dbReference type="SUPFAM" id="SSF103481">
    <property type="entry name" value="Multidrug resistance efflux transporter EmrE"/>
    <property type="match status" value="1"/>
</dbReference>
<protein>
    <recommendedName>
        <fullName evidence="1">Probable 4-amino-4-deoxy-L-arabinose-phosphoundecaprenol flippase subunit ArnF</fullName>
        <shortName evidence="1">L-Ara4N-phosphoundecaprenol flippase subunit ArnF</shortName>
    </recommendedName>
    <alternativeName>
        <fullName evidence="1">Undecaprenyl phosphate-aminoarabinose flippase subunit ArnF</fullName>
    </alternativeName>
</protein>
<evidence type="ECO:0000255" key="1">
    <source>
        <dbReference type="HAMAP-Rule" id="MF_00538"/>
    </source>
</evidence>
<gene>
    <name evidence="1" type="primary">arnF</name>
    <name type="ordered locus">ECDH10B_2419</name>
</gene>
<keyword id="KW-0997">Cell inner membrane</keyword>
<keyword id="KW-1003">Cell membrane</keyword>
<keyword id="KW-0441">Lipid A biosynthesis</keyword>
<keyword id="KW-0444">Lipid biosynthesis</keyword>
<keyword id="KW-0443">Lipid metabolism</keyword>
<keyword id="KW-0448">Lipopolysaccharide biosynthesis</keyword>
<keyword id="KW-0472">Membrane</keyword>
<keyword id="KW-0812">Transmembrane</keyword>
<keyword id="KW-1133">Transmembrane helix</keyword>
<keyword id="KW-0813">Transport</keyword>
<proteinExistence type="inferred from homology"/>
<sequence>MGLMWGLFSVIIASVAQLSLGFAASHLPPMTHLWDFIAALLAFGLDARILLLGLLGYLLSVFCWYKTLHKLALSKAYALLSMSYVLVWIASMVLPGWEGTFSLKALLGVACIMSGLMLIFLPTTKQRY</sequence>
<comment type="function">
    <text evidence="1">Translocates 4-amino-4-deoxy-L-arabinose-phosphoundecaprenol (alpha-L-Ara4N-phosphoundecaprenol) from the cytoplasmic to the periplasmic side of the inner membrane.</text>
</comment>
<comment type="pathway">
    <text evidence="1">Bacterial outer membrane biogenesis; lipopolysaccharide biosynthesis.</text>
</comment>
<comment type="subunit">
    <text evidence="1">Heterodimer of ArnE and ArnF.</text>
</comment>
<comment type="subcellular location">
    <subcellularLocation>
        <location evidence="1">Cell inner membrane</location>
        <topology evidence="1">Multi-pass membrane protein</topology>
    </subcellularLocation>
</comment>
<comment type="similarity">
    <text evidence="1">Belongs to the ArnF family.</text>
</comment>